<comment type="function">
    <text evidence="1">In the hair cortex, hair keratin intermediate filaments are embedded in an interfilamentous matrix, consisting of hair keratin-associated proteins (KRTAP), which are essential for the formation of a rigid and resistant hair shaft through their extensive disulfide bond cross-linking with abundant cysteine residues of hair keratins. The matrix proteins include the high-sulfur and high-glycine-tyrosine keratins (By similarity).</text>
</comment>
<comment type="subunit">
    <text evidence="1">Interacts with hair keratins.</text>
</comment>
<comment type="similarity">
    <text evidence="3">Belongs to the KRTAP type 3 family.</text>
</comment>
<feature type="initiator methionine" description="Removed" evidence="2">
    <location>
        <position position="1"/>
    </location>
</feature>
<feature type="chain" id="PRO_0000358594" description="Keratin-associated protein 3-1">
    <location>
        <begin position="2"/>
        <end position="98"/>
    </location>
</feature>
<feature type="repeat" description="1" evidence="4">
    <location>
        <begin position="3"/>
        <end position="7"/>
    </location>
</feature>
<feature type="repeat" description="2" evidence="4">
    <location>
        <begin position="8"/>
        <end position="12"/>
    </location>
</feature>
<feature type="repeat" description="3" evidence="4">
    <location>
        <begin position="47"/>
        <end position="51"/>
    </location>
</feature>
<feature type="repeat" description="4" evidence="4">
    <location>
        <begin position="55"/>
        <end position="59"/>
    </location>
</feature>
<feature type="region of interest" description="4 X 5 AA repeats of C-C-X(3)" evidence="4">
    <location>
        <begin position="3"/>
        <end position="59"/>
    </location>
</feature>
<feature type="modified residue" description="N-acetylalanine" evidence="2">
    <location>
        <position position="2"/>
    </location>
</feature>
<dbReference type="EMBL" id="AL591417">
    <property type="protein sequence ID" value="CAM19191.1"/>
    <property type="molecule type" value="Genomic_DNA"/>
</dbReference>
<dbReference type="EMBL" id="D86424">
    <property type="protein sequence ID" value="BAA19685.1"/>
    <property type="molecule type" value="mRNA"/>
</dbReference>
<dbReference type="CCDS" id="CCDS48907.1"/>
<dbReference type="RefSeq" id="NP_076000.1">
    <property type="nucleotide sequence ID" value="NM_023511.1"/>
</dbReference>
<dbReference type="FunCoup" id="A2A591">
    <property type="interactions" value="51"/>
</dbReference>
<dbReference type="STRING" id="10090.ENSMUSP00000053940"/>
<dbReference type="GlyGen" id="A2A591">
    <property type="glycosylation" value="1 site"/>
</dbReference>
<dbReference type="PaxDb" id="10090-ENSMUSP00000053940"/>
<dbReference type="PeptideAtlas" id="A2A591"/>
<dbReference type="Antibodypedia" id="76771">
    <property type="antibodies" value="24 antibodies from 4 providers"/>
</dbReference>
<dbReference type="Ensembl" id="ENSMUST00000055502.5">
    <property type="protein sequence ID" value="ENSMUSP00000053940.5"/>
    <property type="gene ID" value="ENSMUSG00000047564.5"/>
</dbReference>
<dbReference type="GeneID" id="69473"/>
<dbReference type="KEGG" id="mmu:69473"/>
<dbReference type="UCSC" id="uc007ljb.1">
    <property type="organism name" value="mouse"/>
</dbReference>
<dbReference type="AGR" id="MGI:1916723"/>
<dbReference type="CTD" id="83896"/>
<dbReference type="MGI" id="MGI:1916723">
    <property type="gene designation" value="Krtap3-1"/>
</dbReference>
<dbReference type="VEuPathDB" id="HostDB:ENSMUSG00000047564"/>
<dbReference type="eggNOG" id="KOG4726">
    <property type="taxonomic scope" value="Eukaryota"/>
</dbReference>
<dbReference type="GeneTree" id="ENSGT00390000001157"/>
<dbReference type="HOGENOM" id="CLU_2359185_0_0_1"/>
<dbReference type="InParanoid" id="A2A591"/>
<dbReference type="OMA" id="NPCEPCC"/>
<dbReference type="OrthoDB" id="50307at9989"/>
<dbReference type="PhylomeDB" id="A2A591"/>
<dbReference type="TreeFam" id="TF338042"/>
<dbReference type="Reactome" id="R-MMU-6805567">
    <property type="pathway name" value="Keratinization"/>
</dbReference>
<dbReference type="BioGRID-ORCS" id="69473">
    <property type="hits" value="3 hits in 75 CRISPR screens"/>
</dbReference>
<dbReference type="PRO" id="PR:A2A591"/>
<dbReference type="Proteomes" id="UP000000589">
    <property type="component" value="Chromosome 11"/>
</dbReference>
<dbReference type="RNAct" id="A2A591">
    <property type="molecule type" value="protein"/>
</dbReference>
<dbReference type="Bgee" id="ENSMUSG00000047564">
    <property type="expression patterns" value="Expressed in lip and 19 other cell types or tissues"/>
</dbReference>
<dbReference type="GO" id="GO:0005829">
    <property type="term" value="C:cytosol"/>
    <property type="evidence" value="ECO:0007669"/>
    <property type="project" value="UniProtKB-ARBA"/>
</dbReference>
<dbReference type="GO" id="GO:0045095">
    <property type="term" value="C:keratin filament"/>
    <property type="evidence" value="ECO:0007669"/>
    <property type="project" value="InterPro"/>
</dbReference>
<dbReference type="GO" id="GO:0005198">
    <property type="term" value="F:structural molecule activity"/>
    <property type="evidence" value="ECO:0007669"/>
    <property type="project" value="InterPro"/>
</dbReference>
<dbReference type="InterPro" id="IPR007659">
    <property type="entry name" value="Keratin_matx"/>
</dbReference>
<dbReference type="PANTHER" id="PTHR23260">
    <property type="entry name" value="KERATIN ASSOCIATED PROTEIN 3-3-RELATED"/>
    <property type="match status" value="1"/>
</dbReference>
<dbReference type="PANTHER" id="PTHR23260:SF3">
    <property type="entry name" value="KERATIN-ASSOCIATED PROTEIN 3-1"/>
    <property type="match status" value="1"/>
</dbReference>
<dbReference type="Pfam" id="PF04579">
    <property type="entry name" value="Keratin_matx"/>
    <property type="match status" value="1"/>
</dbReference>
<protein>
    <recommendedName>
        <fullName>Keratin-associated protein 3-1</fullName>
    </recommendedName>
    <alternativeName>
        <fullName evidence="5">High-sulfur keratin protein</fullName>
    </alternativeName>
</protein>
<organism>
    <name type="scientific">Mus musculus</name>
    <name type="common">Mouse</name>
    <dbReference type="NCBI Taxonomy" id="10090"/>
    <lineage>
        <taxon>Eukaryota</taxon>
        <taxon>Metazoa</taxon>
        <taxon>Chordata</taxon>
        <taxon>Craniata</taxon>
        <taxon>Vertebrata</taxon>
        <taxon>Euteleostomi</taxon>
        <taxon>Mammalia</taxon>
        <taxon>Eutheria</taxon>
        <taxon>Euarchontoglires</taxon>
        <taxon>Glires</taxon>
        <taxon>Rodentia</taxon>
        <taxon>Myomorpha</taxon>
        <taxon>Muroidea</taxon>
        <taxon>Muridae</taxon>
        <taxon>Murinae</taxon>
        <taxon>Mus</taxon>
        <taxon>Mus</taxon>
    </lineage>
</organism>
<name>KRA31_MOUSE</name>
<proteinExistence type="inferred from homology"/>
<accession>A2A591</accession>
<accession>O08634</accession>
<reference key="1">
    <citation type="journal article" date="2009" name="PLoS Biol.">
        <title>Lineage-specific biology revealed by a finished genome assembly of the mouse.</title>
        <authorList>
            <person name="Church D.M."/>
            <person name="Goodstadt L."/>
            <person name="Hillier L.W."/>
            <person name="Zody M.C."/>
            <person name="Goldstein S."/>
            <person name="She X."/>
            <person name="Bult C.J."/>
            <person name="Agarwala R."/>
            <person name="Cherry J.L."/>
            <person name="DiCuccio M."/>
            <person name="Hlavina W."/>
            <person name="Kapustin Y."/>
            <person name="Meric P."/>
            <person name="Maglott D."/>
            <person name="Birtle Z."/>
            <person name="Marques A.C."/>
            <person name="Graves T."/>
            <person name="Zhou S."/>
            <person name="Teague B."/>
            <person name="Potamousis K."/>
            <person name="Churas C."/>
            <person name="Place M."/>
            <person name="Herschleb J."/>
            <person name="Runnheim R."/>
            <person name="Forrest D."/>
            <person name="Amos-Landgraf J."/>
            <person name="Schwartz D.C."/>
            <person name="Cheng Z."/>
            <person name="Lindblad-Toh K."/>
            <person name="Eichler E.E."/>
            <person name="Ponting C.P."/>
        </authorList>
    </citation>
    <scope>NUCLEOTIDE SEQUENCE [LARGE SCALE GENOMIC DNA]</scope>
    <source>
        <strain>C57BL/6J</strain>
    </source>
</reference>
<reference evidence="6" key="2">
    <citation type="submission" date="1996-07" db="EMBL/GenBank/DDBJ databases">
        <title>murine cDNA for high-sulfur keratin.</title>
        <authorList>
            <person name="Aoki N."/>
        </authorList>
    </citation>
    <scope>NUCLEOTIDE SEQUENCE [MRNA] OF 3-98</scope>
    <source>
        <tissue evidence="5">Skin</tissue>
    </source>
</reference>
<sequence>MACCVARCCSVPTGPATTICSSDKSCRCGVCLPSTCPHEISLLQPTCCDPCPPPCCQPEVYVPTCWLLNSCHPTPGLSGINLTTYVQPGCESPCEPCC</sequence>
<keyword id="KW-0007">Acetylation</keyword>
<keyword id="KW-0416">Keratin</keyword>
<keyword id="KW-1185">Reference proteome</keyword>
<keyword id="KW-0677">Repeat</keyword>
<gene>
    <name evidence="7" type="primary">Krtap3-1</name>
</gene>
<evidence type="ECO:0000250" key="1"/>
<evidence type="ECO:0000250" key="2">
    <source>
        <dbReference type="UniProtKB" id="P02447"/>
    </source>
</evidence>
<evidence type="ECO:0000250" key="3">
    <source>
        <dbReference type="UniProtKB" id="Q9BYR8"/>
    </source>
</evidence>
<evidence type="ECO:0000255" key="4"/>
<evidence type="ECO:0000312" key="5">
    <source>
        <dbReference type="EMBL" id="BAA19685.1"/>
    </source>
</evidence>
<evidence type="ECO:0000312" key="6">
    <source>
        <dbReference type="EMBL" id="CAM19191.1"/>
    </source>
</evidence>
<evidence type="ECO:0000312" key="7">
    <source>
        <dbReference type="MGI" id="MGI:1916723"/>
    </source>
</evidence>